<feature type="chain" id="PRO_0000046956" description="Protein hunchback">
    <location>
        <begin position="1" status="less than"/>
        <end position="198" status="greater than"/>
    </location>
</feature>
<feature type="region of interest" description="Disordered" evidence="2">
    <location>
        <begin position="16"/>
        <end position="111"/>
    </location>
</feature>
<feature type="region of interest" description="Disordered" evidence="2">
    <location>
        <begin position="152"/>
        <end position="198"/>
    </location>
</feature>
<feature type="compositionally biased region" description="Basic residues" evidence="2">
    <location>
        <begin position="17"/>
        <end position="31"/>
    </location>
</feature>
<feature type="compositionally biased region" description="Low complexity" evidence="2">
    <location>
        <begin position="35"/>
        <end position="46"/>
    </location>
</feature>
<feature type="compositionally biased region" description="Low complexity" evidence="2">
    <location>
        <begin position="56"/>
        <end position="83"/>
    </location>
</feature>
<feature type="compositionally biased region" description="Polar residues" evidence="2">
    <location>
        <begin position="95"/>
        <end position="105"/>
    </location>
</feature>
<feature type="compositionally biased region" description="Basic and acidic residues" evidence="2">
    <location>
        <begin position="179"/>
        <end position="198"/>
    </location>
</feature>
<feature type="non-consecutive residues" evidence="3">
    <location>
        <begin position="104"/>
        <end position="105"/>
    </location>
</feature>
<feature type="non-terminal residue">
    <location>
        <position position="1"/>
    </location>
</feature>
<feature type="non-terminal residue">
    <location>
        <position position="198"/>
    </location>
</feature>
<protein>
    <recommendedName>
        <fullName>Protein hunchback</fullName>
    </recommendedName>
</protein>
<keyword id="KW-0217">Developmental protein</keyword>
<keyword id="KW-0238">DNA-binding</keyword>
<keyword id="KW-0302">Gap protein</keyword>
<keyword id="KW-0479">Metal-binding</keyword>
<keyword id="KW-0539">Nucleus</keyword>
<keyword id="KW-0677">Repeat</keyword>
<keyword id="KW-0862">Zinc</keyword>
<keyword id="KW-0863">Zinc-finger</keyword>
<sequence>WYSSMFAANIKQEPISHHHHHHHAHHSHHQHPHDSNSNSNASSPHQSPLPSPNPPSNTNLQLEQYLKQQQQQQQQQQQQQQQQPMDTLCAAAMTPSPSNNDQNSPLMLPGLPNPMQSIMLANLRPSPTTTTTTTTPAAAPTTTAATIALQANDKLQALTPPMDVTPPKSPAKSQQSCAEPEKEHDLMSNSSEDMKYMA</sequence>
<comment type="function">
    <text evidence="1">Gap class segmentation protein that controls development of head structures.</text>
</comment>
<comment type="subcellular location">
    <subcellularLocation>
        <location evidence="1">Nucleus</location>
    </subcellularLocation>
</comment>
<comment type="similarity">
    <text evidence="3">Belongs to the hunchback C2H2-type zinc-finger protein family.</text>
</comment>
<organism>
    <name type="scientific">Drosophila lineosetae</name>
    <name type="common">Fruit fly</name>
    <dbReference type="NCBI Taxonomy" id="46802"/>
    <lineage>
        <taxon>Eukaryota</taxon>
        <taxon>Metazoa</taxon>
        <taxon>Ecdysozoa</taxon>
        <taxon>Arthropoda</taxon>
        <taxon>Hexapoda</taxon>
        <taxon>Insecta</taxon>
        <taxon>Pterygota</taxon>
        <taxon>Neoptera</taxon>
        <taxon>Endopterygota</taxon>
        <taxon>Diptera</taxon>
        <taxon>Brachycera</taxon>
        <taxon>Muscomorpha</taxon>
        <taxon>Ephydroidea</taxon>
        <taxon>Drosophilidae</taxon>
        <taxon>Drosophila</taxon>
        <taxon>Hawaiian Drosophila</taxon>
    </lineage>
</organism>
<reference key="1">
    <citation type="journal article" date="1997" name="Syst. Biol.">
        <title>Multiple sources of character information and the phylogeny of Hawaiian Drosophilids.</title>
        <authorList>
            <person name="Baker R.H."/>
            <person name="DeSalle R."/>
        </authorList>
    </citation>
    <scope>NUCLEOTIDE SEQUENCE [GENOMIC DNA]</scope>
</reference>
<evidence type="ECO:0000250" key="1"/>
<evidence type="ECO:0000256" key="2">
    <source>
        <dbReference type="SAM" id="MobiDB-lite"/>
    </source>
</evidence>
<evidence type="ECO:0000305" key="3"/>
<proteinExistence type="inferred from homology"/>
<dbReference type="EMBL" id="U93008">
    <property type="protein sequence ID" value="AAC03256.1"/>
    <property type="molecule type" value="Genomic_DNA"/>
</dbReference>
<dbReference type="EMBL" id="U93009">
    <property type="protein sequence ID" value="AAC03257.1"/>
    <property type="molecule type" value="Genomic_DNA"/>
</dbReference>
<dbReference type="GO" id="GO:0005634">
    <property type="term" value="C:nucleus"/>
    <property type="evidence" value="ECO:0007669"/>
    <property type="project" value="UniProtKB-SubCell"/>
</dbReference>
<dbReference type="GO" id="GO:0003677">
    <property type="term" value="F:DNA binding"/>
    <property type="evidence" value="ECO:0007669"/>
    <property type="project" value="UniProtKB-KW"/>
</dbReference>
<dbReference type="GO" id="GO:0008270">
    <property type="term" value="F:zinc ion binding"/>
    <property type="evidence" value="ECO:0007669"/>
    <property type="project" value="UniProtKB-KW"/>
</dbReference>
<dbReference type="GO" id="GO:0035282">
    <property type="term" value="P:segmentation"/>
    <property type="evidence" value="ECO:0007669"/>
    <property type="project" value="UniProtKB-KW"/>
</dbReference>
<gene>
    <name type="primary">hb</name>
</gene>
<name>HUNB_DROLI</name>
<accession>O46244</accession>
<accession>O46245</accession>